<sequence>MVNFTVDQMRSLMDKVTNVRNMSVIAHVDHGKSTLTDSLVQRAGIISAAKAGEARFTDTRKDEQERGITIKSTAISLYSEMGDDDVKEIKQKTEGNSFLINLIDSPGHVDFSSEVTAALRVTDGALVVVDCVEGVCVQTETVLRQALGERIKPVVVINKVDRALLELQVTKEDLYQSFARTVESVNVVIATYTDKTIGDNQVYPEQGTVAFGSGLHGWAFTVRQFATRYSKKFGVDRIKMMERLWGDSYFNPKTKKWTNKDKDAAGKPLERAFNMFVLDPIFRLFAAIMNFKKDEIPVLLEKLEINLKREEKELEGKALLKVVMRKFLPAADALLEMIVLHLPSPVTAQAYRAETLYEGPSDDQFCIGIRECDPKAELMVYISKMVPTSDKGRFYAFGRVFSGTVKSGQKVRIQGPNYVPGKKEDLFIKAVQRTVLMMGRTVEPIDDVPAGNILGIVGIDQFLLKSGTLTTNEAAHNMKVMKFSVSPVVQVAVEVKNANDLPKLVEGLKRLSKSDPCVLTYISESGEHIVAGTGELHLEICLQDLQDDHAGVPLKISPPVVTYRETVTNESSMTALSKSQNKHNRIYLKAQPIDEELSLAIEEGKVHPRDDFKARARIMADEYGWDVTDARKIWCFGPDGTGANLVVDQSKAVQYLHEIKDSVVAGFQLATKEGPILGENMRSVRVNILDVTLHADAIHRGGGQVIPTMKRVTYAAFLLAEPAIQEPIFLVEIQCPENAIGGIYSVLNKKRGQVISEEQRPGTPLFTVKAYLPVNESFGFTGELRQATAGQAFPQMVFDHWANMNGNPLDPASKVGEIVLAARKRQGMKENVPGYEEYYDKL</sequence>
<comment type="function">
    <text evidence="1">Catalyzes the GTP-dependent ribosomal translocation step during translation elongation. During this step, the ribosome changes from the pre-translocational (PRE) to the post-translocational (POST) state as the newly formed A-site-bound peptidyl-tRNA and P-site-bound deacylated tRNA move to the P and E sites, respectively. Catalyzes the coordinated movement of the two tRNA molecules, the mRNA and conformational changes in the ribosome.</text>
</comment>
<comment type="catalytic activity">
    <reaction evidence="1">
        <text>GTP + H2O = GDP + phosphate + H(+)</text>
        <dbReference type="Rhea" id="RHEA:19669"/>
        <dbReference type="ChEBI" id="CHEBI:15377"/>
        <dbReference type="ChEBI" id="CHEBI:15378"/>
        <dbReference type="ChEBI" id="CHEBI:37565"/>
        <dbReference type="ChEBI" id="CHEBI:43474"/>
        <dbReference type="ChEBI" id="CHEBI:58189"/>
    </reaction>
    <physiologicalReaction direction="left-to-right" evidence="1">
        <dbReference type="Rhea" id="RHEA:19670"/>
    </physiologicalReaction>
</comment>
<comment type="subcellular location">
    <subcellularLocation>
        <location evidence="1">Cytoplasm</location>
    </subcellularLocation>
</comment>
<comment type="similarity">
    <text evidence="2">Belongs to the TRAFAC class translation factor GTPase superfamily. Classic translation factor GTPase family. EF-G/EF-2 subfamily.</text>
</comment>
<protein>
    <recommendedName>
        <fullName>Elongation factor 2</fullName>
        <shortName>EF-2</shortName>
        <ecNumber evidence="1">3.6.5.-</ecNumber>
    </recommendedName>
</protein>
<proteinExistence type="inferred from homology"/>
<keyword id="KW-0963">Cytoplasm</keyword>
<keyword id="KW-0251">Elongation factor</keyword>
<keyword id="KW-0342">GTP-binding</keyword>
<keyword id="KW-0378">Hydrolase</keyword>
<keyword id="KW-0547">Nucleotide-binding</keyword>
<keyword id="KW-0648">Protein biosynthesis</keyword>
<reference key="1">
    <citation type="journal article" date="2003" name="Protein Expr. Purif.">
        <title>Targeted introduction of a diphtheria toxin resistant mutation into the chromosomal EF-2 locus of Pichia pastoris and expression of immunotoxin in the EF-2 mutants.</title>
        <authorList>
            <person name="Liu Y.Y."/>
            <person name="Woo J.H."/>
            <person name="Neville D.M. Jr."/>
        </authorList>
    </citation>
    <scope>NUCLEOTIDE SEQUENCE [GENOMIC DNA]</scope>
</reference>
<feature type="chain" id="PRO_0000091020" description="Elongation factor 2">
    <location>
        <begin position="1"/>
        <end position="842"/>
    </location>
</feature>
<feature type="domain" description="tr-type G" evidence="2">
    <location>
        <begin position="17"/>
        <end position="253"/>
    </location>
</feature>
<feature type="binding site" evidence="1">
    <location>
        <begin position="26"/>
        <end position="33"/>
    </location>
    <ligand>
        <name>GTP</name>
        <dbReference type="ChEBI" id="CHEBI:37565"/>
    </ligand>
</feature>
<feature type="binding site" evidence="1">
    <location>
        <begin position="158"/>
        <end position="161"/>
    </location>
    <ligand>
        <name>GTP</name>
        <dbReference type="ChEBI" id="CHEBI:37565"/>
    </ligand>
</feature>
<feature type="binding site" evidence="1">
    <location>
        <begin position="213"/>
        <end position="215"/>
    </location>
    <ligand>
        <name>GTP</name>
        <dbReference type="ChEBI" id="CHEBI:37565"/>
    </ligand>
</feature>
<feature type="modified residue" description="Diphthamide" evidence="1">
    <location>
        <position position="699"/>
    </location>
</feature>
<evidence type="ECO:0000250" key="1">
    <source>
        <dbReference type="UniProtKB" id="P32324"/>
    </source>
</evidence>
<evidence type="ECO:0000255" key="2">
    <source>
        <dbReference type="PROSITE-ProRule" id="PRU01059"/>
    </source>
</evidence>
<name>EF2_PICPA</name>
<accession>Q874B9</accession>
<gene>
    <name type="primary">EFT1</name>
    <name type="synonym">PEF1</name>
</gene>
<organism>
    <name type="scientific">Komagataella pastoris</name>
    <name type="common">Yeast</name>
    <name type="synonym">Pichia pastoris</name>
    <dbReference type="NCBI Taxonomy" id="4922"/>
    <lineage>
        <taxon>Eukaryota</taxon>
        <taxon>Fungi</taxon>
        <taxon>Dikarya</taxon>
        <taxon>Ascomycota</taxon>
        <taxon>Saccharomycotina</taxon>
        <taxon>Pichiomycetes</taxon>
        <taxon>Pichiales</taxon>
        <taxon>Pichiaceae</taxon>
        <taxon>Komagataella</taxon>
    </lineage>
</organism>
<dbReference type="EC" id="3.6.5.-" evidence="1"/>
<dbReference type="EMBL" id="AY219033">
    <property type="protein sequence ID" value="AAO39212.1"/>
    <property type="molecule type" value="Genomic_DNA"/>
</dbReference>
<dbReference type="SMR" id="Q874B9"/>
<dbReference type="GO" id="GO:0005829">
    <property type="term" value="C:cytosol"/>
    <property type="evidence" value="ECO:0007669"/>
    <property type="project" value="TreeGrafter"/>
</dbReference>
<dbReference type="GO" id="GO:1990904">
    <property type="term" value="C:ribonucleoprotein complex"/>
    <property type="evidence" value="ECO:0007669"/>
    <property type="project" value="TreeGrafter"/>
</dbReference>
<dbReference type="GO" id="GO:0005525">
    <property type="term" value="F:GTP binding"/>
    <property type="evidence" value="ECO:0007669"/>
    <property type="project" value="UniProtKB-KW"/>
</dbReference>
<dbReference type="GO" id="GO:0003924">
    <property type="term" value="F:GTPase activity"/>
    <property type="evidence" value="ECO:0007669"/>
    <property type="project" value="InterPro"/>
</dbReference>
<dbReference type="GO" id="GO:0043022">
    <property type="term" value="F:ribosome binding"/>
    <property type="evidence" value="ECO:0007669"/>
    <property type="project" value="TreeGrafter"/>
</dbReference>
<dbReference type="GO" id="GO:0003746">
    <property type="term" value="F:translation elongation factor activity"/>
    <property type="evidence" value="ECO:0007669"/>
    <property type="project" value="UniProtKB-KW"/>
</dbReference>
<dbReference type="CDD" id="cd01681">
    <property type="entry name" value="aeEF2_snRNP_like_IV"/>
    <property type="match status" value="1"/>
</dbReference>
<dbReference type="CDD" id="cd04096">
    <property type="entry name" value="eEF2_snRNP_like_C"/>
    <property type="match status" value="1"/>
</dbReference>
<dbReference type="CDD" id="cd01885">
    <property type="entry name" value="EF2"/>
    <property type="match status" value="1"/>
</dbReference>
<dbReference type="CDD" id="cd16261">
    <property type="entry name" value="EF2_snRNP_III"/>
    <property type="match status" value="1"/>
</dbReference>
<dbReference type="CDD" id="cd03700">
    <property type="entry name" value="EF2_snRNP_like_II"/>
    <property type="match status" value="1"/>
</dbReference>
<dbReference type="FunFam" id="2.40.30.10:FF:000010">
    <property type="entry name" value="Translation elongation factor 2"/>
    <property type="match status" value="1"/>
</dbReference>
<dbReference type="FunFam" id="3.30.230.10:FF:000006">
    <property type="entry name" value="Translation elongation factor 2"/>
    <property type="match status" value="1"/>
</dbReference>
<dbReference type="FunFam" id="3.30.70.240:FF:000003">
    <property type="entry name" value="Translation elongation factor 2"/>
    <property type="match status" value="1"/>
</dbReference>
<dbReference type="FunFam" id="3.30.70.870:FF:000002">
    <property type="entry name" value="Translation elongation factor 2"/>
    <property type="match status" value="1"/>
</dbReference>
<dbReference type="FunFam" id="3.40.50.300:FF:000058">
    <property type="entry name" value="Translation elongation factor 2"/>
    <property type="match status" value="1"/>
</dbReference>
<dbReference type="Gene3D" id="3.30.230.10">
    <property type="match status" value="1"/>
</dbReference>
<dbReference type="Gene3D" id="3.30.70.240">
    <property type="match status" value="1"/>
</dbReference>
<dbReference type="Gene3D" id="3.30.70.870">
    <property type="entry name" value="Elongation Factor G (Translational Gtpase), domain 3"/>
    <property type="match status" value="1"/>
</dbReference>
<dbReference type="Gene3D" id="3.40.50.300">
    <property type="entry name" value="P-loop containing nucleotide triphosphate hydrolases"/>
    <property type="match status" value="1"/>
</dbReference>
<dbReference type="Gene3D" id="2.40.30.10">
    <property type="entry name" value="Translation factors"/>
    <property type="match status" value="1"/>
</dbReference>
<dbReference type="InterPro" id="IPR041095">
    <property type="entry name" value="EFG_II"/>
</dbReference>
<dbReference type="InterPro" id="IPR035647">
    <property type="entry name" value="EFG_III/V"/>
</dbReference>
<dbReference type="InterPro" id="IPR000640">
    <property type="entry name" value="EFG_V-like"/>
</dbReference>
<dbReference type="InterPro" id="IPR004161">
    <property type="entry name" value="EFTu-like_2"/>
</dbReference>
<dbReference type="InterPro" id="IPR031157">
    <property type="entry name" value="G_TR_CS"/>
</dbReference>
<dbReference type="InterPro" id="IPR027417">
    <property type="entry name" value="P-loop_NTPase"/>
</dbReference>
<dbReference type="InterPro" id="IPR020568">
    <property type="entry name" value="Ribosomal_Su5_D2-typ_SF"/>
</dbReference>
<dbReference type="InterPro" id="IPR014721">
    <property type="entry name" value="Ribsml_uS5_D2-typ_fold_subgr"/>
</dbReference>
<dbReference type="InterPro" id="IPR005225">
    <property type="entry name" value="Small_GTP-bd"/>
</dbReference>
<dbReference type="InterPro" id="IPR000795">
    <property type="entry name" value="T_Tr_GTP-bd_dom"/>
</dbReference>
<dbReference type="InterPro" id="IPR009000">
    <property type="entry name" value="Transl_B-barrel_sf"/>
</dbReference>
<dbReference type="InterPro" id="IPR005517">
    <property type="entry name" value="Transl_elong_EFG/EF2_IV"/>
</dbReference>
<dbReference type="NCBIfam" id="TIGR00231">
    <property type="entry name" value="small_GTP"/>
    <property type="match status" value="1"/>
</dbReference>
<dbReference type="PANTHER" id="PTHR42908:SF10">
    <property type="entry name" value="EUKARYOTIC TRANSLATION ELONGATION FACTOR 2"/>
    <property type="match status" value="1"/>
</dbReference>
<dbReference type="PANTHER" id="PTHR42908">
    <property type="entry name" value="TRANSLATION ELONGATION FACTOR-RELATED"/>
    <property type="match status" value="1"/>
</dbReference>
<dbReference type="Pfam" id="PF00679">
    <property type="entry name" value="EFG_C"/>
    <property type="match status" value="1"/>
</dbReference>
<dbReference type="Pfam" id="PF14492">
    <property type="entry name" value="EFG_III"/>
    <property type="match status" value="1"/>
</dbReference>
<dbReference type="Pfam" id="PF03764">
    <property type="entry name" value="EFG_IV"/>
    <property type="match status" value="1"/>
</dbReference>
<dbReference type="Pfam" id="PF00009">
    <property type="entry name" value="GTP_EFTU"/>
    <property type="match status" value="1"/>
</dbReference>
<dbReference type="Pfam" id="PF03144">
    <property type="entry name" value="GTP_EFTU_D2"/>
    <property type="match status" value="1"/>
</dbReference>
<dbReference type="PRINTS" id="PR00315">
    <property type="entry name" value="ELONGATNFCT"/>
</dbReference>
<dbReference type="SMART" id="SM00838">
    <property type="entry name" value="EFG_C"/>
    <property type="match status" value="1"/>
</dbReference>
<dbReference type="SMART" id="SM00889">
    <property type="entry name" value="EFG_IV"/>
    <property type="match status" value="1"/>
</dbReference>
<dbReference type="SUPFAM" id="SSF54980">
    <property type="entry name" value="EF-G C-terminal domain-like"/>
    <property type="match status" value="2"/>
</dbReference>
<dbReference type="SUPFAM" id="SSF52540">
    <property type="entry name" value="P-loop containing nucleoside triphosphate hydrolases"/>
    <property type="match status" value="1"/>
</dbReference>
<dbReference type="SUPFAM" id="SSF54211">
    <property type="entry name" value="Ribosomal protein S5 domain 2-like"/>
    <property type="match status" value="1"/>
</dbReference>
<dbReference type="SUPFAM" id="SSF50447">
    <property type="entry name" value="Translation proteins"/>
    <property type="match status" value="1"/>
</dbReference>
<dbReference type="PROSITE" id="PS00301">
    <property type="entry name" value="G_TR_1"/>
    <property type="match status" value="1"/>
</dbReference>
<dbReference type="PROSITE" id="PS51722">
    <property type="entry name" value="G_TR_2"/>
    <property type="match status" value="1"/>
</dbReference>